<accession>Q0IEN3</accession>
<feature type="chain" id="PRO_0000370564" description="tRNA (guanine-N(7)-)-methyltransferase">
    <location>
        <begin position="1"/>
        <end position="245"/>
    </location>
</feature>
<feature type="active site" evidence="1">
    <location>
        <position position="149"/>
    </location>
</feature>
<feature type="binding site" evidence="1">
    <location>
        <position position="70"/>
    </location>
    <ligand>
        <name>S-adenosyl-L-methionine</name>
        <dbReference type="ChEBI" id="CHEBI:59789"/>
    </ligand>
</feature>
<feature type="binding site" evidence="1">
    <location>
        <begin position="93"/>
        <end position="94"/>
    </location>
    <ligand>
        <name>S-adenosyl-L-methionine</name>
        <dbReference type="ChEBI" id="CHEBI:59789"/>
    </ligand>
</feature>
<feature type="binding site" evidence="1">
    <location>
        <begin position="126"/>
        <end position="127"/>
    </location>
    <ligand>
        <name>S-adenosyl-L-methionine</name>
        <dbReference type="ChEBI" id="CHEBI:59789"/>
    </ligand>
</feature>
<feature type="binding site" evidence="1">
    <location>
        <position position="146"/>
    </location>
    <ligand>
        <name>S-adenosyl-L-methionine</name>
        <dbReference type="ChEBI" id="CHEBI:59789"/>
    </ligand>
</feature>
<feature type="binding site" evidence="1">
    <location>
        <begin position="224"/>
        <end position="226"/>
    </location>
    <ligand>
        <name>S-adenosyl-L-methionine</name>
        <dbReference type="ChEBI" id="CHEBI:59789"/>
    </ligand>
</feature>
<keyword id="KW-0489">Methyltransferase</keyword>
<keyword id="KW-0539">Nucleus</keyword>
<keyword id="KW-1185">Reference proteome</keyword>
<keyword id="KW-0694">RNA-binding</keyword>
<keyword id="KW-0949">S-adenosyl-L-methionine</keyword>
<keyword id="KW-0808">Transferase</keyword>
<keyword id="KW-0819">tRNA processing</keyword>
<keyword id="KW-0820">tRNA-binding</keyword>
<dbReference type="EC" id="2.1.1.33" evidence="1"/>
<dbReference type="EMBL" id="CH477558">
    <property type="protein sequence ID" value="EAT39016.1"/>
    <property type="molecule type" value="Genomic_DNA"/>
</dbReference>
<dbReference type="RefSeq" id="XP_001653710.1">
    <property type="nucleotide sequence ID" value="XM_001653660.1"/>
</dbReference>
<dbReference type="SMR" id="Q0IEN3"/>
<dbReference type="FunCoup" id="Q0IEN3">
    <property type="interactions" value="964"/>
</dbReference>
<dbReference type="STRING" id="7159.Q0IEN3"/>
<dbReference type="PaxDb" id="7159-AAEL009156-PA"/>
<dbReference type="GeneID" id="5571573"/>
<dbReference type="KEGG" id="aag:5571573"/>
<dbReference type="VEuPathDB" id="VectorBase:AAEL009156"/>
<dbReference type="eggNOG" id="KOG3115">
    <property type="taxonomic scope" value="Eukaryota"/>
</dbReference>
<dbReference type="HOGENOM" id="CLU_050910_3_1_1"/>
<dbReference type="InParanoid" id="Q0IEN3"/>
<dbReference type="OMA" id="LPNYFAK"/>
<dbReference type="OrthoDB" id="47276at2759"/>
<dbReference type="PhylomeDB" id="Q0IEN3"/>
<dbReference type="UniPathway" id="UPA00989"/>
<dbReference type="Proteomes" id="UP000008820">
    <property type="component" value="Unassembled WGS sequence"/>
</dbReference>
<dbReference type="Proteomes" id="UP000682892">
    <property type="component" value="Unassembled WGS sequence"/>
</dbReference>
<dbReference type="GO" id="GO:0005634">
    <property type="term" value="C:nucleus"/>
    <property type="evidence" value="ECO:0007669"/>
    <property type="project" value="UniProtKB-SubCell"/>
</dbReference>
<dbReference type="GO" id="GO:0043527">
    <property type="term" value="C:tRNA methyltransferase complex"/>
    <property type="evidence" value="ECO:0007669"/>
    <property type="project" value="TreeGrafter"/>
</dbReference>
<dbReference type="GO" id="GO:0008176">
    <property type="term" value="F:tRNA (guanine(46)-N7)-methyltransferase activity"/>
    <property type="evidence" value="ECO:0007669"/>
    <property type="project" value="UniProtKB-UniRule"/>
</dbReference>
<dbReference type="GO" id="GO:0000049">
    <property type="term" value="F:tRNA binding"/>
    <property type="evidence" value="ECO:0007669"/>
    <property type="project" value="UniProtKB-UniRule"/>
</dbReference>
<dbReference type="FunFam" id="3.40.50.150:FF:000060">
    <property type="entry name" value="tRNA (guanine-N(7)-)-methyltransferase"/>
    <property type="match status" value="1"/>
</dbReference>
<dbReference type="Gene3D" id="3.40.50.150">
    <property type="entry name" value="Vaccinia Virus protein VP39"/>
    <property type="match status" value="1"/>
</dbReference>
<dbReference type="HAMAP" id="MF_03055">
    <property type="entry name" value="tRNA_methyltr_TrmB_euk"/>
    <property type="match status" value="1"/>
</dbReference>
<dbReference type="InterPro" id="IPR029063">
    <property type="entry name" value="SAM-dependent_MTases_sf"/>
</dbReference>
<dbReference type="InterPro" id="IPR025763">
    <property type="entry name" value="Trm8_euk"/>
</dbReference>
<dbReference type="InterPro" id="IPR003358">
    <property type="entry name" value="tRNA_(Gua-N-7)_MeTrfase_Trmb"/>
</dbReference>
<dbReference type="NCBIfam" id="TIGR00091">
    <property type="entry name" value="tRNA (guanosine(46)-N7)-methyltransferase TrmB"/>
    <property type="match status" value="1"/>
</dbReference>
<dbReference type="PANTHER" id="PTHR23417">
    <property type="entry name" value="3-DEOXY-D-MANNO-OCTULOSONIC-ACID TRANSFERASE/TRNA GUANINE-N 7 - -METHYLTRANSFERASE"/>
    <property type="match status" value="1"/>
</dbReference>
<dbReference type="PANTHER" id="PTHR23417:SF16">
    <property type="entry name" value="TRNA (GUANINE-N(7)-)-METHYLTRANSFERASE"/>
    <property type="match status" value="1"/>
</dbReference>
<dbReference type="Pfam" id="PF02390">
    <property type="entry name" value="Methyltransf_4"/>
    <property type="match status" value="1"/>
</dbReference>
<dbReference type="SUPFAM" id="SSF53335">
    <property type="entry name" value="S-adenosyl-L-methionine-dependent methyltransferases"/>
    <property type="match status" value="1"/>
</dbReference>
<dbReference type="PROSITE" id="PS51625">
    <property type="entry name" value="SAM_MT_TRMB"/>
    <property type="match status" value="1"/>
</dbReference>
<gene>
    <name type="ORF">AAEL009156</name>
</gene>
<reference key="1">
    <citation type="journal article" date="2007" name="Science">
        <title>Genome sequence of Aedes aegypti, a major arbovirus vector.</title>
        <authorList>
            <person name="Nene V."/>
            <person name="Wortman J.R."/>
            <person name="Lawson D."/>
            <person name="Haas B.J."/>
            <person name="Kodira C.D."/>
            <person name="Tu Z.J."/>
            <person name="Loftus B.J."/>
            <person name="Xi Z."/>
            <person name="Megy K."/>
            <person name="Grabherr M."/>
            <person name="Ren Q."/>
            <person name="Zdobnov E.M."/>
            <person name="Lobo N.F."/>
            <person name="Campbell K.S."/>
            <person name="Brown S.E."/>
            <person name="Bonaldo M.F."/>
            <person name="Zhu J."/>
            <person name="Sinkins S.P."/>
            <person name="Hogenkamp D.G."/>
            <person name="Amedeo P."/>
            <person name="Arensburger P."/>
            <person name="Atkinson P.W."/>
            <person name="Bidwell S.L."/>
            <person name="Biedler J."/>
            <person name="Birney E."/>
            <person name="Bruggner R.V."/>
            <person name="Costas J."/>
            <person name="Coy M.R."/>
            <person name="Crabtree J."/>
            <person name="Crawford M."/>
            <person name="DeBruyn B."/>
            <person name="DeCaprio D."/>
            <person name="Eiglmeier K."/>
            <person name="Eisenstadt E."/>
            <person name="El-Dorry H."/>
            <person name="Gelbart W.M."/>
            <person name="Gomes S.L."/>
            <person name="Hammond M."/>
            <person name="Hannick L.I."/>
            <person name="Hogan J.R."/>
            <person name="Holmes M.H."/>
            <person name="Jaffe D."/>
            <person name="Johnston S.J."/>
            <person name="Kennedy R.C."/>
            <person name="Koo H."/>
            <person name="Kravitz S."/>
            <person name="Kriventseva E.V."/>
            <person name="Kulp D."/>
            <person name="Labutti K."/>
            <person name="Lee E."/>
            <person name="Li S."/>
            <person name="Lovin D.D."/>
            <person name="Mao C."/>
            <person name="Mauceli E."/>
            <person name="Menck C.F."/>
            <person name="Miller J.R."/>
            <person name="Montgomery P."/>
            <person name="Mori A."/>
            <person name="Nascimento A.L."/>
            <person name="Naveira H.F."/>
            <person name="Nusbaum C."/>
            <person name="O'Leary S.B."/>
            <person name="Orvis J."/>
            <person name="Pertea M."/>
            <person name="Quesneville H."/>
            <person name="Reidenbach K.R."/>
            <person name="Rogers Y.-H.C."/>
            <person name="Roth C.W."/>
            <person name="Schneider J.R."/>
            <person name="Schatz M."/>
            <person name="Shumway M."/>
            <person name="Stanke M."/>
            <person name="Stinson E.O."/>
            <person name="Tubio J.M.C."/>
            <person name="Vanzee J.P."/>
            <person name="Verjovski-Almeida S."/>
            <person name="Werner D."/>
            <person name="White O.R."/>
            <person name="Wyder S."/>
            <person name="Zeng Q."/>
            <person name="Zhao Q."/>
            <person name="Zhao Y."/>
            <person name="Hill C.A."/>
            <person name="Raikhel A.S."/>
            <person name="Soares M.B."/>
            <person name="Knudson D.L."/>
            <person name="Lee N.H."/>
            <person name="Galagan J."/>
            <person name="Salzberg S.L."/>
            <person name="Paulsen I.T."/>
            <person name="Dimopoulos G."/>
            <person name="Collins F.H."/>
            <person name="Bruce B."/>
            <person name="Fraser-Liggett C.M."/>
            <person name="Severson D.W."/>
        </authorList>
    </citation>
    <scope>NUCLEOTIDE SEQUENCE [LARGE SCALE GENOMIC DNA]</scope>
    <source>
        <strain>LVPib12</strain>
    </source>
</reference>
<name>TRMB_AEDAE</name>
<protein>
    <recommendedName>
        <fullName evidence="1">tRNA (guanine-N(7)-)-methyltransferase</fullName>
        <ecNumber evidence="1">2.1.1.33</ecNumber>
    </recommendedName>
    <alternativeName>
        <fullName evidence="1">tRNA (guanine(46)-N(7))-methyltransferase</fullName>
    </alternativeName>
    <alternativeName>
        <fullName evidence="1">tRNA(m7G46)-methyltransferase</fullName>
    </alternativeName>
</protein>
<sequence>MEVEESKNDASVVASPAPTKLPQKRFYRQRAHSNPIADHSFDYPIHPDDYDWSQHYPTIGDKRVEFADIGCGYGGFLVTLGEMFPDKFAVGMEIRVKVSDYVMDRIQALRKLNEGQYENIACIRTNAMKYLTNFFHKGQLEKMFFLYPDPHFKKAKHKWRIINSALLSEYSYVLRQGGLIYTITDVKDLHEWMCKHIEQHPAFERLTDDEVKADVLSEKLLDSSEEGKKVTRNKGDKFVAIFRKI</sequence>
<proteinExistence type="inferred from homology"/>
<organism>
    <name type="scientific">Aedes aegypti</name>
    <name type="common">Yellowfever mosquito</name>
    <name type="synonym">Culex aegypti</name>
    <dbReference type="NCBI Taxonomy" id="7159"/>
    <lineage>
        <taxon>Eukaryota</taxon>
        <taxon>Metazoa</taxon>
        <taxon>Ecdysozoa</taxon>
        <taxon>Arthropoda</taxon>
        <taxon>Hexapoda</taxon>
        <taxon>Insecta</taxon>
        <taxon>Pterygota</taxon>
        <taxon>Neoptera</taxon>
        <taxon>Endopterygota</taxon>
        <taxon>Diptera</taxon>
        <taxon>Nematocera</taxon>
        <taxon>Culicoidea</taxon>
        <taxon>Culicidae</taxon>
        <taxon>Culicinae</taxon>
        <taxon>Aedini</taxon>
        <taxon>Aedes</taxon>
        <taxon>Stegomyia</taxon>
    </lineage>
</organism>
<evidence type="ECO:0000255" key="1">
    <source>
        <dbReference type="HAMAP-Rule" id="MF_03055"/>
    </source>
</evidence>
<comment type="function">
    <text evidence="1">Catalyzes the formation of N(7)-methylguanine at position 46 (m7G46) in tRNA.</text>
</comment>
<comment type="catalytic activity">
    <reaction evidence="1">
        <text>guanosine(46) in tRNA + S-adenosyl-L-methionine = N(7)-methylguanosine(46) in tRNA + S-adenosyl-L-homocysteine</text>
        <dbReference type="Rhea" id="RHEA:42708"/>
        <dbReference type="Rhea" id="RHEA-COMP:10188"/>
        <dbReference type="Rhea" id="RHEA-COMP:10189"/>
        <dbReference type="ChEBI" id="CHEBI:57856"/>
        <dbReference type="ChEBI" id="CHEBI:59789"/>
        <dbReference type="ChEBI" id="CHEBI:74269"/>
        <dbReference type="ChEBI" id="CHEBI:74480"/>
        <dbReference type="EC" id="2.1.1.33"/>
    </reaction>
</comment>
<comment type="pathway">
    <text evidence="1">tRNA modification; N(7)-methylguanine-tRNA biosynthesis.</text>
</comment>
<comment type="subcellular location">
    <subcellularLocation>
        <location evidence="1">Nucleus</location>
    </subcellularLocation>
</comment>
<comment type="similarity">
    <text evidence="1">Belongs to the class I-like SAM-binding methyltransferase superfamily. TrmB family.</text>
</comment>